<gene>
    <name evidence="6" type="primary">PRSS45P</name>
    <name evidence="6" type="synonym">PRSS45</name>
    <name type="synonym">TESSP5</name>
</gene>
<comment type="alternative products">
    <event type="alternative splicing"/>
    <isoform>
        <id>Q7RTY3-1</id>
        <name>1</name>
        <sequence type="displayed"/>
    </isoform>
    <isoform>
        <id>Q7RTY3-2</id>
        <name>2</name>
        <sequence type="described" ref="VSP_035355"/>
    </isoform>
</comment>
<comment type="similarity">
    <text evidence="3">Belongs to the peptidase S1 family.</text>
</comment>
<comment type="caution">
    <text evidence="5">Could be the product of a pseudogene.</text>
</comment>
<name>PRS45_HUMAN</name>
<feature type="chain" id="PRO_0000349307" description="Putative serine protease 45">
    <location>
        <begin position="1"/>
        <end position="260"/>
    </location>
</feature>
<feature type="domain" description="Peptidase S1" evidence="3">
    <location>
        <begin position="1"/>
        <end position="234"/>
    </location>
</feature>
<feature type="active site" description="Charge relay system" evidence="1">
    <location>
        <position position="34"/>
    </location>
</feature>
<feature type="active site" description="Charge relay system" evidence="1">
    <location>
        <position position="82"/>
    </location>
</feature>
<feature type="active site" description="Charge relay system" evidence="1">
    <location>
        <position position="186"/>
    </location>
</feature>
<feature type="glycosylation site" description="N-linked (GlcNAc...) asparagine" evidence="2">
    <location>
        <position position="55"/>
    </location>
</feature>
<feature type="disulfide bond" evidence="3">
    <location>
        <begin position="19"/>
        <end position="35"/>
    </location>
</feature>
<feature type="disulfide bond" evidence="3">
    <location>
        <begin position="116"/>
        <end position="192"/>
    </location>
</feature>
<feature type="disulfide bond" evidence="3">
    <location>
        <begin position="151"/>
        <end position="173"/>
    </location>
</feature>
<feature type="disulfide bond" evidence="3">
    <location>
        <begin position="182"/>
        <end position="210"/>
    </location>
</feature>
<feature type="splice variant" id="VSP_035355" description="In isoform 2." evidence="4">
    <original>EYVQPICLPEPNFNLKVGTQCWVTGWSQVKQRFS</original>
    <variation>ST</variation>
    <location>
        <begin position="96"/>
        <end position="129"/>
    </location>
</feature>
<dbReference type="EC" id="3.4.21.-"/>
<dbReference type="EMBL" id="AC134504">
    <property type="status" value="NOT_ANNOTATED_CDS"/>
    <property type="molecule type" value="Genomic_DNA"/>
</dbReference>
<dbReference type="EMBL" id="BC133695">
    <property type="protein sequence ID" value="AAI33696.1"/>
    <property type="molecule type" value="mRNA"/>
</dbReference>
<dbReference type="EMBL" id="BN000137">
    <property type="protein sequence ID" value="CAD68171.1"/>
    <property type="molecule type" value="mRNA"/>
</dbReference>
<dbReference type="RefSeq" id="NP_954652.2">
    <property type="nucleotide sequence ID" value="NM_199183.2"/>
</dbReference>
<dbReference type="SMR" id="Q7RTY3"/>
<dbReference type="BioGRID" id="132016">
    <property type="interactions" value="7"/>
</dbReference>
<dbReference type="FunCoup" id="Q7RTY3">
    <property type="interactions" value="110"/>
</dbReference>
<dbReference type="IntAct" id="Q7RTY3">
    <property type="interactions" value="5"/>
</dbReference>
<dbReference type="MINT" id="Q7RTY3"/>
<dbReference type="STRING" id="9606.ENSP00000401932"/>
<dbReference type="MEROPS" id="S01.326"/>
<dbReference type="GlyCosmos" id="Q7RTY3">
    <property type="glycosylation" value="1 site, No reported glycans"/>
</dbReference>
<dbReference type="GlyGen" id="Q7RTY3">
    <property type="glycosylation" value="1 site"/>
</dbReference>
<dbReference type="BioMuta" id="PRSS45"/>
<dbReference type="DMDM" id="74759052"/>
<dbReference type="MassIVE" id="Q7RTY3"/>
<dbReference type="Antibodypedia" id="53159">
    <property type="antibodies" value="18 antibodies from 9 providers"/>
</dbReference>
<dbReference type="UCSC" id="uc010hjl.4">
    <molecule id="Q7RTY3-1"/>
    <property type="organism name" value="human"/>
</dbReference>
<dbReference type="AGR" id="HGNC:30717"/>
<dbReference type="GeneCards" id="PRSS45P"/>
<dbReference type="HGNC" id="HGNC:30717">
    <property type="gene designation" value="PRSS45P"/>
</dbReference>
<dbReference type="neXtProt" id="NX_Q7RTY3"/>
<dbReference type="VEuPathDB" id="HostDB:ENSG00000188086"/>
<dbReference type="HOGENOM" id="CLU_006842_0_4_1"/>
<dbReference type="InParanoid" id="Q7RTY3"/>
<dbReference type="OMA" id="GNMICAT"/>
<dbReference type="OrthoDB" id="546450at2759"/>
<dbReference type="PAN-GO" id="Q7RTY3">
    <property type="GO annotations" value="3 GO annotations based on evolutionary models"/>
</dbReference>
<dbReference type="PhylomeDB" id="Q7RTY3"/>
<dbReference type="TreeFam" id="TF351676"/>
<dbReference type="PathwayCommons" id="Q7RTY3"/>
<dbReference type="SignaLink" id="Q7RTY3"/>
<dbReference type="BioGRID-ORCS" id="377047">
    <property type="hits" value="6 hits in 1137 CRISPR screens"/>
</dbReference>
<dbReference type="GenomeRNAi" id="377047"/>
<dbReference type="Pharos" id="Q7RTY3">
    <property type="development level" value="Tdark"/>
</dbReference>
<dbReference type="PRO" id="PR:Q7RTY3"/>
<dbReference type="Proteomes" id="UP000005640">
    <property type="component" value="Chromosome 3"/>
</dbReference>
<dbReference type="RNAct" id="Q7RTY3">
    <property type="molecule type" value="protein"/>
</dbReference>
<dbReference type="Bgee" id="ENSG00000188086">
    <property type="expression patterns" value="Expressed in male germ line stem cell (sensu Vertebrata) in testis and 79 other cell types or tissues"/>
</dbReference>
<dbReference type="ExpressionAtlas" id="Q7RTY3">
    <property type="expression patterns" value="baseline and differential"/>
</dbReference>
<dbReference type="GO" id="GO:0005615">
    <property type="term" value="C:extracellular space"/>
    <property type="evidence" value="ECO:0000318"/>
    <property type="project" value="GO_Central"/>
</dbReference>
<dbReference type="GO" id="GO:0004252">
    <property type="term" value="F:serine-type endopeptidase activity"/>
    <property type="evidence" value="ECO:0000318"/>
    <property type="project" value="GO_Central"/>
</dbReference>
<dbReference type="GO" id="GO:0006508">
    <property type="term" value="P:proteolysis"/>
    <property type="evidence" value="ECO:0000318"/>
    <property type="project" value="GO_Central"/>
</dbReference>
<dbReference type="CDD" id="cd00190">
    <property type="entry name" value="Tryp_SPc"/>
    <property type="match status" value="1"/>
</dbReference>
<dbReference type="FunFam" id="2.40.10.10:FF:000105">
    <property type="entry name" value="Inactive serine protease 45"/>
    <property type="match status" value="1"/>
</dbReference>
<dbReference type="FunFam" id="2.40.10.10:FF:000004">
    <property type="entry name" value="Tryptase gamma 1"/>
    <property type="match status" value="1"/>
</dbReference>
<dbReference type="Gene3D" id="2.40.10.10">
    <property type="entry name" value="Trypsin-like serine proteases"/>
    <property type="match status" value="2"/>
</dbReference>
<dbReference type="InterPro" id="IPR009003">
    <property type="entry name" value="Peptidase_S1_PA"/>
</dbReference>
<dbReference type="InterPro" id="IPR043504">
    <property type="entry name" value="Peptidase_S1_PA_chymotrypsin"/>
</dbReference>
<dbReference type="InterPro" id="IPR001314">
    <property type="entry name" value="Peptidase_S1A"/>
</dbReference>
<dbReference type="InterPro" id="IPR051487">
    <property type="entry name" value="Ser/Thr_Proteases_Immune/Dev"/>
</dbReference>
<dbReference type="InterPro" id="IPR001254">
    <property type="entry name" value="Trypsin_dom"/>
</dbReference>
<dbReference type="InterPro" id="IPR018114">
    <property type="entry name" value="TRYPSIN_HIS"/>
</dbReference>
<dbReference type="PANTHER" id="PTHR24256">
    <property type="entry name" value="TRYPTASE-RELATED"/>
    <property type="match status" value="1"/>
</dbReference>
<dbReference type="Pfam" id="PF00089">
    <property type="entry name" value="Trypsin"/>
    <property type="match status" value="1"/>
</dbReference>
<dbReference type="PRINTS" id="PR00722">
    <property type="entry name" value="CHYMOTRYPSIN"/>
</dbReference>
<dbReference type="SMART" id="SM00020">
    <property type="entry name" value="Tryp_SPc"/>
    <property type="match status" value="1"/>
</dbReference>
<dbReference type="SUPFAM" id="SSF50494">
    <property type="entry name" value="Trypsin-like serine proteases"/>
    <property type="match status" value="1"/>
</dbReference>
<dbReference type="PROSITE" id="PS50240">
    <property type="entry name" value="TRYPSIN_DOM"/>
    <property type="match status" value="1"/>
</dbReference>
<dbReference type="PROSITE" id="PS00134">
    <property type="entry name" value="TRYPSIN_HIS"/>
    <property type="match status" value="1"/>
</dbReference>
<proteinExistence type="uncertain"/>
<organism>
    <name type="scientific">Homo sapiens</name>
    <name type="common">Human</name>
    <dbReference type="NCBI Taxonomy" id="9606"/>
    <lineage>
        <taxon>Eukaryota</taxon>
        <taxon>Metazoa</taxon>
        <taxon>Chordata</taxon>
        <taxon>Craniata</taxon>
        <taxon>Vertebrata</taxon>
        <taxon>Euteleostomi</taxon>
        <taxon>Mammalia</taxon>
        <taxon>Eutheria</taxon>
        <taxon>Euarchontoglires</taxon>
        <taxon>Primates</taxon>
        <taxon>Haplorrhini</taxon>
        <taxon>Catarrhini</taxon>
        <taxon>Hominidae</taxon>
        <taxon>Homo</taxon>
    </lineage>
</organism>
<sequence length="260" mass="29329">MTRHWPWEVSLRMENEHVCGGALIDPSWVVTAAHCIQGTKEYSVVLGTSKLQPMNFSRALWVPVRDIIMHPKYWGRAFIMGDVALVHLQTPVTFSEYVQPICLPEPNFNLKVGTQCWVTGWSQVKQRFSANSMLTPELQEAEVFIMDNKRCDRHYKKSFFPPVVPLVLGDMICATNYGENLCYGDSGGPLACEVEGRWILAGVLSWEKACVKAQNPGVYTRITKYTKWIKKQMSNGAFSGPCASACLLFLCWLLQPQMGS</sequence>
<accession>Q7RTY3</accession>
<accession>A3KN77</accession>
<keyword id="KW-0025">Alternative splicing</keyword>
<keyword id="KW-1015">Disulfide bond</keyword>
<keyword id="KW-0325">Glycoprotein</keyword>
<keyword id="KW-0378">Hydrolase</keyword>
<keyword id="KW-0645">Protease</keyword>
<keyword id="KW-1185">Reference proteome</keyword>
<keyword id="KW-0720">Serine protease</keyword>
<protein>
    <recommendedName>
        <fullName evidence="5">Putative serine protease 45</fullName>
        <ecNumber>3.4.21.-</ecNumber>
    </recommendedName>
    <alternativeName>
        <fullName evidence="5">Serine protease 45, pseudogene</fullName>
    </alternativeName>
    <alternativeName>
        <fullName>Testis serine protease 5</fullName>
    </alternativeName>
</protein>
<reference key="1">
    <citation type="journal article" date="2006" name="Nature">
        <title>The DNA sequence, annotation and analysis of human chromosome 3.</title>
        <authorList>
            <person name="Muzny D.M."/>
            <person name="Scherer S.E."/>
            <person name="Kaul R."/>
            <person name="Wang J."/>
            <person name="Yu J."/>
            <person name="Sudbrak R."/>
            <person name="Buhay C.J."/>
            <person name="Chen R."/>
            <person name="Cree A."/>
            <person name="Ding Y."/>
            <person name="Dugan-Rocha S."/>
            <person name="Gill R."/>
            <person name="Gunaratne P."/>
            <person name="Harris R.A."/>
            <person name="Hawes A.C."/>
            <person name="Hernandez J."/>
            <person name="Hodgson A.V."/>
            <person name="Hume J."/>
            <person name="Jackson A."/>
            <person name="Khan Z.M."/>
            <person name="Kovar-Smith C."/>
            <person name="Lewis L.R."/>
            <person name="Lozado R.J."/>
            <person name="Metzker M.L."/>
            <person name="Milosavljevic A."/>
            <person name="Miner G.R."/>
            <person name="Morgan M.B."/>
            <person name="Nazareth L.V."/>
            <person name="Scott G."/>
            <person name="Sodergren E."/>
            <person name="Song X.-Z."/>
            <person name="Steffen D."/>
            <person name="Wei S."/>
            <person name="Wheeler D.A."/>
            <person name="Wright M.W."/>
            <person name="Worley K.C."/>
            <person name="Yuan Y."/>
            <person name="Zhang Z."/>
            <person name="Adams C.Q."/>
            <person name="Ansari-Lari M.A."/>
            <person name="Ayele M."/>
            <person name="Brown M.J."/>
            <person name="Chen G."/>
            <person name="Chen Z."/>
            <person name="Clendenning J."/>
            <person name="Clerc-Blankenburg K.P."/>
            <person name="Chen R."/>
            <person name="Chen Z."/>
            <person name="Davis C."/>
            <person name="Delgado O."/>
            <person name="Dinh H.H."/>
            <person name="Dong W."/>
            <person name="Draper H."/>
            <person name="Ernst S."/>
            <person name="Fu G."/>
            <person name="Gonzalez-Garay M.L."/>
            <person name="Garcia D.K."/>
            <person name="Gillett W."/>
            <person name="Gu J."/>
            <person name="Hao B."/>
            <person name="Haugen E."/>
            <person name="Havlak P."/>
            <person name="He X."/>
            <person name="Hennig S."/>
            <person name="Hu S."/>
            <person name="Huang W."/>
            <person name="Jackson L.R."/>
            <person name="Jacob L.S."/>
            <person name="Kelly S.H."/>
            <person name="Kube M."/>
            <person name="Levy R."/>
            <person name="Li Z."/>
            <person name="Liu B."/>
            <person name="Liu J."/>
            <person name="Liu W."/>
            <person name="Lu J."/>
            <person name="Maheshwari M."/>
            <person name="Nguyen B.-V."/>
            <person name="Okwuonu G.O."/>
            <person name="Palmeiri A."/>
            <person name="Pasternak S."/>
            <person name="Perez L.M."/>
            <person name="Phelps K.A."/>
            <person name="Plopper F.J."/>
            <person name="Qiang B."/>
            <person name="Raymond C."/>
            <person name="Rodriguez R."/>
            <person name="Saenphimmachak C."/>
            <person name="Santibanez J."/>
            <person name="Shen H."/>
            <person name="Shen Y."/>
            <person name="Subramanian S."/>
            <person name="Tabor P.E."/>
            <person name="Verduzco D."/>
            <person name="Waldron L."/>
            <person name="Wang J."/>
            <person name="Wang J."/>
            <person name="Wang Q."/>
            <person name="Williams G.A."/>
            <person name="Wong G.K.-S."/>
            <person name="Yao Z."/>
            <person name="Zhang J."/>
            <person name="Zhang X."/>
            <person name="Zhao G."/>
            <person name="Zhou J."/>
            <person name="Zhou Y."/>
            <person name="Nelson D."/>
            <person name="Lehrach H."/>
            <person name="Reinhardt R."/>
            <person name="Naylor S.L."/>
            <person name="Yang H."/>
            <person name="Olson M."/>
            <person name="Weinstock G."/>
            <person name="Gibbs R.A."/>
        </authorList>
    </citation>
    <scope>NUCLEOTIDE SEQUENCE [LARGE SCALE GENOMIC DNA]</scope>
</reference>
<reference key="2">
    <citation type="journal article" date="2004" name="Genome Res.">
        <title>The status, quality, and expansion of the NIH full-length cDNA project: the Mammalian Gene Collection (MGC).</title>
        <authorList>
            <consortium name="The MGC Project Team"/>
        </authorList>
    </citation>
    <scope>NUCLEOTIDE SEQUENCE [LARGE SCALE MRNA] (ISOFORM 2)</scope>
</reference>
<reference key="3">
    <citation type="journal article" date="2003" name="Nat. Rev. Genet.">
        <title>Human and mouse proteases: a comparative genomic approach.</title>
        <authorList>
            <person name="Puente X.S."/>
            <person name="Sanchez L.M."/>
            <person name="Overall C.M."/>
            <person name="Lopez-Otin C."/>
        </authorList>
    </citation>
    <scope>IDENTIFICATION</scope>
</reference>
<evidence type="ECO:0000250" key="1"/>
<evidence type="ECO:0000255" key="2"/>
<evidence type="ECO:0000255" key="3">
    <source>
        <dbReference type="PROSITE-ProRule" id="PRU00274"/>
    </source>
</evidence>
<evidence type="ECO:0000303" key="4">
    <source>
    </source>
</evidence>
<evidence type="ECO:0000305" key="5"/>
<evidence type="ECO:0000312" key="6">
    <source>
        <dbReference type="HGNC" id="HGNC:30717"/>
    </source>
</evidence>